<gene>
    <name evidence="1" type="primary">rplR</name>
    <name type="ordered locus">TW222</name>
</gene>
<proteinExistence type="inferred from homology"/>
<accession>Q83I63</accession>
<protein>
    <recommendedName>
        <fullName evidence="1">Large ribosomal subunit protein uL18</fullName>
    </recommendedName>
    <alternativeName>
        <fullName evidence="2">50S ribosomal protein L18</fullName>
    </alternativeName>
</protein>
<name>RL18_TROW8</name>
<sequence length="119" mass="12835">MSLTSRASARKRRHVRLRKKISGTCDRPRLSVTRSNRHVFVQAVDDISGKTLVSASTMEKDIRALELGKTERALAVGKLVAQRALAVGVKSAVFDRGGCKYTGRVAAVAEGAREAGLQT</sequence>
<feature type="chain" id="PRO_0000131377" description="Large ribosomal subunit protein uL18">
    <location>
        <begin position="1"/>
        <end position="119"/>
    </location>
</feature>
<comment type="function">
    <text evidence="1">This is one of the proteins that bind and probably mediate the attachment of the 5S RNA into the large ribosomal subunit, where it forms part of the central protuberance.</text>
</comment>
<comment type="subunit">
    <text evidence="1">Part of the 50S ribosomal subunit; part of the 5S rRNA/L5/L18/L25 subcomplex. Contacts the 5S and 23S rRNAs.</text>
</comment>
<comment type="similarity">
    <text evidence="1">Belongs to the universal ribosomal protein uL18 family.</text>
</comment>
<dbReference type="EMBL" id="BX251410">
    <property type="protein sequence ID" value="CAD66899.1"/>
    <property type="molecule type" value="Genomic_DNA"/>
</dbReference>
<dbReference type="RefSeq" id="WP_011096180.1">
    <property type="nucleotide sequence ID" value="NC_004551.1"/>
</dbReference>
<dbReference type="SMR" id="Q83I63"/>
<dbReference type="GeneID" id="67387998"/>
<dbReference type="KEGG" id="tws:TW222"/>
<dbReference type="HOGENOM" id="CLU_098841_0_1_11"/>
<dbReference type="GO" id="GO:0022625">
    <property type="term" value="C:cytosolic large ribosomal subunit"/>
    <property type="evidence" value="ECO:0007669"/>
    <property type="project" value="TreeGrafter"/>
</dbReference>
<dbReference type="GO" id="GO:0008097">
    <property type="term" value="F:5S rRNA binding"/>
    <property type="evidence" value="ECO:0007669"/>
    <property type="project" value="TreeGrafter"/>
</dbReference>
<dbReference type="GO" id="GO:0003735">
    <property type="term" value="F:structural constituent of ribosome"/>
    <property type="evidence" value="ECO:0007669"/>
    <property type="project" value="InterPro"/>
</dbReference>
<dbReference type="GO" id="GO:0006412">
    <property type="term" value="P:translation"/>
    <property type="evidence" value="ECO:0007669"/>
    <property type="project" value="UniProtKB-UniRule"/>
</dbReference>
<dbReference type="CDD" id="cd00432">
    <property type="entry name" value="Ribosomal_L18_L5e"/>
    <property type="match status" value="1"/>
</dbReference>
<dbReference type="FunFam" id="3.30.420.100:FF:000001">
    <property type="entry name" value="50S ribosomal protein L18"/>
    <property type="match status" value="1"/>
</dbReference>
<dbReference type="Gene3D" id="3.30.420.100">
    <property type="match status" value="1"/>
</dbReference>
<dbReference type="HAMAP" id="MF_01337_B">
    <property type="entry name" value="Ribosomal_uL18_B"/>
    <property type="match status" value="1"/>
</dbReference>
<dbReference type="InterPro" id="IPR004389">
    <property type="entry name" value="Ribosomal_uL18_bac-type"/>
</dbReference>
<dbReference type="InterPro" id="IPR005484">
    <property type="entry name" value="Ribosomal_uL18_bac/euk"/>
</dbReference>
<dbReference type="NCBIfam" id="TIGR00060">
    <property type="entry name" value="L18_bact"/>
    <property type="match status" value="1"/>
</dbReference>
<dbReference type="PANTHER" id="PTHR12899">
    <property type="entry name" value="39S RIBOSOMAL PROTEIN L18, MITOCHONDRIAL"/>
    <property type="match status" value="1"/>
</dbReference>
<dbReference type="PANTHER" id="PTHR12899:SF3">
    <property type="entry name" value="LARGE RIBOSOMAL SUBUNIT PROTEIN UL18M"/>
    <property type="match status" value="1"/>
</dbReference>
<dbReference type="Pfam" id="PF00861">
    <property type="entry name" value="Ribosomal_L18p"/>
    <property type="match status" value="1"/>
</dbReference>
<dbReference type="SUPFAM" id="SSF53137">
    <property type="entry name" value="Translational machinery components"/>
    <property type="match status" value="1"/>
</dbReference>
<organism>
    <name type="scientific">Tropheryma whipplei (strain TW08/27)</name>
    <name type="common">Whipple's bacillus</name>
    <dbReference type="NCBI Taxonomy" id="218496"/>
    <lineage>
        <taxon>Bacteria</taxon>
        <taxon>Bacillati</taxon>
        <taxon>Actinomycetota</taxon>
        <taxon>Actinomycetes</taxon>
        <taxon>Micrococcales</taxon>
        <taxon>Tropherymataceae</taxon>
        <taxon>Tropheryma</taxon>
    </lineage>
</organism>
<keyword id="KW-0687">Ribonucleoprotein</keyword>
<keyword id="KW-0689">Ribosomal protein</keyword>
<keyword id="KW-0694">RNA-binding</keyword>
<keyword id="KW-0699">rRNA-binding</keyword>
<evidence type="ECO:0000255" key="1">
    <source>
        <dbReference type="HAMAP-Rule" id="MF_01337"/>
    </source>
</evidence>
<evidence type="ECO:0000305" key="2"/>
<reference key="1">
    <citation type="journal article" date="2003" name="Lancet">
        <title>Sequencing and analysis of the genome of the Whipple's disease bacterium Tropheryma whipplei.</title>
        <authorList>
            <person name="Bentley S.D."/>
            <person name="Maiwald M."/>
            <person name="Murphy L.D."/>
            <person name="Pallen M.J."/>
            <person name="Yeats C.A."/>
            <person name="Dover L.G."/>
            <person name="Norbertczak H.T."/>
            <person name="Besra G.S."/>
            <person name="Quail M.A."/>
            <person name="Harris D.E."/>
            <person name="von Herbay A."/>
            <person name="Goble A."/>
            <person name="Rutter S."/>
            <person name="Squares R."/>
            <person name="Squares S."/>
            <person name="Barrell B.G."/>
            <person name="Parkhill J."/>
            <person name="Relman D.A."/>
        </authorList>
    </citation>
    <scope>NUCLEOTIDE SEQUENCE [LARGE SCALE GENOMIC DNA]</scope>
    <source>
        <strain>TW08/27</strain>
    </source>
</reference>